<evidence type="ECO:0000255" key="1">
    <source>
        <dbReference type="HAMAP-Rule" id="MF_00300"/>
    </source>
</evidence>
<evidence type="ECO:0000305" key="2"/>
<dbReference type="EC" id="4.2.3.5" evidence="1"/>
<dbReference type="EMBL" id="AJ248284">
    <property type="protein sequence ID" value="CAB49379.1"/>
    <property type="molecule type" value="Genomic_DNA"/>
</dbReference>
<dbReference type="EMBL" id="HE613800">
    <property type="protein sequence ID" value="CCE69840.1"/>
    <property type="molecule type" value="Genomic_DNA"/>
</dbReference>
<dbReference type="PIR" id="D75162">
    <property type="entry name" value="D75162"/>
</dbReference>
<dbReference type="RefSeq" id="WP_010867581.1">
    <property type="nucleotide sequence ID" value="NC_000868.1"/>
</dbReference>
<dbReference type="SMR" id="Q9V1H0"/>
<dbReference type="STRING" id="272844.PAB0307"/>
<dbReference type="KEGG" id="pab:PAB0307"/>
<dbReference type="PATRIC" id="fig|272844.11.peg.484"/>
<dbReference type="eggNOG" id="arCOG04133">
    <property type="taxonomic scope" value="Archaea"/>
</dbReference>
<dbReference type="HOGENOM" id="CLU_034547_0_0_2"/>
<dbReference type="OrthoDB" id="33049at2157"/>
<dbReference type="PhylomeDB" id="Q9V1H0"/>
<dbReference type="UniPathway" id="UPA00053">
    <property type="reaction ID" value="UER00090"/>
</dbReference>
<dbReference type="Proteomes" id="UP000000810">
    <property type="component" value="Chromosome"/>
</dbReference>
<dbReference type="Proteomes" id="UP000009139">
    <property type="component" value="Chromosome"/>
</dbReference>
<dbReference type="GO" id="GO:0005829">
    <property type="term" value="C:cytosol"/>
    <property type="evidence" value="ECO:0007669"/>
    <property type="project" value="TreeGrafter"/>
</dbReference>
<dbReference type="GO" id="GO:0004107">
    <property type="term" value="F:chorismate synthase activity"/>
    <property type="evidence" value="ECO:0007669"/>
    <property type="project" value="UniProtKB-UniRule"/>
</dbReference>
<dbReference type="GO" id="GO:0010181">
    <property type="term" value="F:FMN binding"/>
    <property type="evidence" value="ECO:0007669"/>
    <property type="project" value="TreeGrafter"/>
</dbReference>
<dbReference type="GO" id="GO:0008652">
    <property type="term" value="P:amino acid biosynthetic process"/>
    <property type="evidence" value="ECO:0007669"/>
    <property type="project" value="UniProtKB-KW"/>
</dbReference>
<dbReference type="GO" id="GO:0009073">
    <property type="term" value="P:aromatic amino acid family biosynthetic process"/>
    <property type="evidence" value="ECO:0007669"/>
    <property type="project" value="UniProtKB-KW"/>
</dbReference>
<dbReference type="GO" id="GO:0009423">
    <property type="term" value="P:chorismate biosynthetic process"/>
    <property type="evidence" value="ECO:0007669"/>
    <property type="project" value="UniProtKB-UniRule"/>
</dbReference>
<dbReference type="CDD" id="cd07304">
    <property type="entry name" value="Chorismate_synthase"/>
    <property type="match status" value="1"/>
</dbReference>
<dbReference type="FunFam" id="3.60.150.10:FF:000002">
    <property type="entry name" value="Chorismate synthase"/>
    <property type="match status" value="1"/>
</dbReference>
<dbReference type="Gene3D" id="3.60.150.10">
    <property type="entry name" value="Chorismate synthase AroC"/>
    <property type="match status" value="1"/>
</dbReference>
<dbReference type="HAMAP" id="MF_00300">
    <property type="entry name" value="Chorismate_synth"/>
    <property type="match status" value="1"/>
</dbReference>
<dbReference type="InterPro" id="IPR000453">
    <property type="entry name" value="Chorismate_synth"/>
</dbReference>
<dbReference type="InterPro" id="IPR035904">
    <property type="entry name" value="Chorismate_synth_AroC_sf"/>
</dbReference>
<dbReference type="InterPro" id="IPR020541">
    <property type="entry name" value="Chorismate_synthase_CS"/>
</dbReference>
<dbReference type="NCBIfam" id="TIGR00033">
    <property type="entry name" value="aroC"/>
    <property type="match status" value="1"/>
</dbReference>
<dbReference type="NCBIfam" id="NF003793">
    <property type="entry name" value="PRK05382.1"/>
    <property type="match status" value="1"/>
</dbReference>
<dbReference type="PANTHER" id="PTHR21085">
    <property type="entry name" value="CHORISMATE SYNTHASE"/>
    <property type="match status" value="1"/>
</dbReference>
<dbReference type="PANTHER" id="PTHR21085:SF0">
    <property type="entry name" value="CHORISMATE SYNTHASE"/>
    <property type="match status" value="1"/>
</dbReference>
<dbReference type="Pfam" id="PF01264">
    <property type="entry name" value="Chorismate_synt"/>
    <property type="match status" value="1"/>
</dbReference>
<dbReference type="PIRSF" id="PIRSF001456">
    <property type="entry name" value="Chorismate_synth"/>
    <property type="match status" value="1"/>
</dbReference>
<dbReference type="SUPFAM" id="SSF103263">
    <property type="entry name" value="Chorismate synthase, AroC"/>
    <property type="match status" value="1"/>
</dbReference>
<dbReference type="PROSITE" id="PS00787">
    <property type="entry name" value="CHORISMATE_SYNTHASE_1"/>
    <property type="match status" value="1"/>
</dbReference>
<dbReference type="PROSITE" id="PS00788">
    <property type="entry name" value="CHORISMATE_SYNTHASE_2"/>
    <property type="match status" value="1"/>
</dbReference>
<dbReference type="PROSITE" id="PS00789">
    <property type="entry name" value="CHORISMATE_SYNTHASE_3"/>
    <property type="match status" value="1"/>
</dbReference>
<comment type="function">
    <text evidence="1">Catalyzes the anti-1,4-elimination of the C-3 phosphate and the C-6 proR hydrogen from 5-enolpyruvylshikimate-3-phosphate (EPSP) to yield chorismate, which is the branch point compound that serves as the starting substrate for the three terminal pathways of aromatic amino acid biosynthesis. This reaction introduces a second double bond into the aromatic ring system.</text>
</comment>
<comment type="catalytic activity">
    <reaction evidence="1">
        <text>5-O-(1-carboxyvinyl)-3-phosphoshikimate = chorismate + phosphate</text>
        <dbReference type="Rhea" id="RHEA:21020"/>
        <dbReference type="ChEBI" id="CHEBI:29748"/>
        <dbReference type="ChEBI" id="CHEBI:43474"/>
        <dbReference type="ChEBI" id="CHEBI:57701"/>
        <dbReference type="EC" id="4.2.3.5"/>
    </reaction>
</comment>
<comment type="cofactor">
    <cofactor evidence="1">
        <name>FMNH2</name>
        <dbReference type="ChEBI" id="CHEBI:57618"/>
    </cofactor>
    <text evidence="1">Reduced FMN (FMNH(2)).</text>
</comment>
<comment type="pathway">
    <text evidence="1">Metabolic intermediate biosynthesis; chorismate biosynthesis; chorismate from D-erythrose 4-phosphate and phosphoenolpyruvate: step 7/7.</text>
</comment>
<comment type="similarity">
    <text evidence="1 2">Belongs to the chorismate synthase family.</text>
</comment>
<accession>Q9V1H0</accession>
<accession>G8ZGG1</accession>
<feature type="chain" id="PRO_0000140694" description="Chorismate synthase">
    <location>
        <begin position="1"/>
        <end position="356"/>
    </location>
</feature>
<feature type="binding site" evidence="1">
    <location>
        <position position="44"/>
    </location>
    <ligand>
        <name>NADP(+)</name>
        <dbReference type="ChEBI" id="CHEBI:58349"/>
    </ligand>
</feature>
<feature type="binding site" evidence="1">
    <location>
        <begin position="121"/>
        <end position="123"/>
    </location>
    <ligand>
        <name>FMN</name>
        <dbReference type="ChEBI" id="CHEBI:58210"/>
    </ligand>
</feature>
<feature type="binding site" evidence="1">
    <location>
        <position position="278"/>
    </location>
    <ligand>
        <name>FMN</name>
        <dbReference type="ChEBI" id="CHEBI:58210"/>
    </ligand>
</feature>
<feature type="binding site" evidence="1">
    <location>
        <begin position="293"/>
        <end position="297"/>
    </location>
    <ligand>
        <name>FMN</name>
        <dbReference type="ChEBI" id="CHEBI:58210"/>
    </ligand>
</feature>
<feature type="binding site" evidence="1">
    <location>
        <position position="320"/>
    </location>
    <ligand>
        <name>FMN</name>
        <dbReference type="ChEBI" id="CHEBI:58210"/>
    </ligand>
</feature>
<proteinExistence type="inferred from homology"/>
<organism>
    <name type="scientific">Pyrococcus abyssi (strain GE5 / Orsay)</name>
    <dbReference type="NCBI Taxonomy" id="272844"/>
    <lineage>
        <taxon>Archaea</taxon>
        <taxon>Methanobacteriati</taxon>
        <taxon>Methanobacteriota</taxon>
        <taxon>Thermococci</taxon>
        <taxon>Thermococcales</taxon>
        <taxon>Thermococcaceae</taxon>
        <taxon>Pyrococcus</taxon>
    </lineage>
</organism>
<reference key="1">
    <citation type="journal article" date="2003" name="Mol. Microbiol.">
        <title>An integrated analysis of the genome of the hyperthermophilic archaeon Pyrococcus abyssi.</title>
        <authorList>
            <person name="Cohen G.N."/>
            <person name="Barbe V."/>
            <person name="Flament D."/>
            <person name="Galperin M."/>
            <person name="Heilig R."/>
            <person name="Lecompte O."/>
            <person name="Poch O."/>
            <person name="Prieur D."/>
            <person name="Querellou J."/>
            <person name="Ripp R."/>
            <person name="Thierry J.-C."/>
            <person name="Van der Oost J."/>
            <person name="Weissenbach J."/>
            <person name="Zivanovic Y."/>
            <person name="Forterre P."/>
        </authorList>
    </citation>
    <scope>NUCLEOTIDE SEQUENCE [LARGE SCALE GENOMIC DNA]</scope>
    <source>
        <strain>GE5 / Orsay</strain>
    </source>
</reference>
<reference key="2">
    <citation type="journal article" date="2012" name="Curr. Microbiol.">
        <title>Re-annotation of two hyperthermophilic archaea Pyrococcus abyssi GE5 and Pyrococcus furiosus DSM 3638.</title>
        <authorList>
            <person name="Gao J."/>
            <person name="Wang J."/>
        </authorList>
    </citation>
    <scope>GENOME REANNOTATION</scope>
    <source>
        <strain>GE5 / Orsay</strain>
    </source>
</reference>
<gene>
    <name evidence="1" type="primary">aroC</name>
    <name type="ordered locus">PYRAB04570</name>
    <name type="ORF">PAB0307</name>
</gene>
<keyword id="KW-0028">Amino-acid biosynthesis</keyword>
<keyword id="KW-0057">Aromatic amino acid biosynthesis</keyword>
<keyword id="KW-0274">FAD</keyword>
<keyword id="KW-0285">Flavoprotein</keyword>
<keyword id="KW-0288">FMN</keyword>
<keyword id="KW-0456">Lyase</keyword>
<keyword id="KW-0521">NADP</keyword>
<sequence>MRGRVLSFTLFGESHGKGVGVVITGIPPGIKVSHEELVKELERRKGIPGLSTARSEPDNPIILSGIFRGYTTGTPIAVLFENKDVDSSYYEDIKDKPRPGHADYPARIKYFGYNDYRGGGHFSGRLTVGIVTAGYFAKKILEKYGIRIRAYIKRIGRVEAKQLTLEEILSSENPFCPDEEAFEKMVEEIELARREGDSVGGIVEVVAVNVPPGLGGPYEEDIEADLASAFFRIPAVKGVEFGLGFKVAEKRGSEVNDPYVIRDGKVVTKTNNHGGVLGGITTGMPIIARIAFKPTPSIYLPQRTVDLREMKEVEIKLRGRFDPSIVPRALPVVEGVMAFVLADHLLFRRVWELKSS</sequence>
<protein>
    <recommendedName>
        <fullName evidence="1">Chorismate synthase</fullName>
        <shortName evidence="1">CS</shortName>
        <ecNumber evidence="1">4.2.3.5</ecNumber>
    </recommendedName>
    <alternativeName>
        <fullName evidence="1">5-enolpyruvylshikimate-3-phosphate phospholyase</fullName>
    </alternativeName>
</protein>
<name>AROC_PYRAB</name>